<gene>
    <name evidence="3" type="primary">lat</name>
</gene>
<protein>
    <recommendedName>
        <fullName evidence="4">L-lysine-epsilon aminotransferase</fullName>
        <shortName evidence="4">L-lysine aminotransferase</shortName>
        <shortName evidence="3">LAT</shortName>
        <ecNumber evidence="2">2.6.1.36</ecNumber>
    </recommendedName>
    <alternativeName>
        <fullName evidence="3">Lysine 6-aminotransferase</fullName>
    </alternativeName>
    <alternativeName>
        <fullName evidence="3">Lysine:2-ketoglutarate 6-aminotransferase</fullName>
    </alternativeName>
</protein>
<sequence>MVLEMPAARVPAGPDARDVRQALARHVLTDGYDLVLDLEASAGPWLVDAVTGTRYLDLFSFFASAPLGINPSCIVDDPAFVGELAAAAVNKPSNPDVYTVPYAKFVTTFARVLGDPLLPHLFFVDGGALAVENALKAAFDWKAQKLGLDDRAVNRLQVLHLERSFHGRSGYTMSLTNTDPSKTARYPKFDWPRIPAPALEHPLTTHAEANREAERRALEAAEEAFRAADGMIACFLAEPIQGEGGDNHFSAEFLQAMQDLCHRHDALFVLDEVQSGCGLTGTAWAYQQLGLRPDLVAFGKKTQVCGVMGGGRIGEVESNVFAVSSRISSTWGGNLADMVRATRVLETIERTDLLDSVVQRGKYLRDGLEALAERHPGVVTNARGRGLMCAVDLPDTEQRDAVLRRMYTGHQVIALPCGTRGLRFRPPLTVTESELDQGLEALAASLASRG</sequence>
<organism>
    <name type="scientific">Amycolatopsis lactamdurans</name>
    <name type="common">Nocardia lactamdurans</name>
    <dbReference type="NCBI Taxonomy" id="1913"/>
    <lineage>
        <taxon>Bacteria</taxon>
        <taxon>Bacillati</taxon>
        <taxon>Actinomycetota</taxon>
        <taxon>Actinomycetes</taxon>
        <taxon>Pseudonocardiales</taxon>
        <taxon>Pseudonocardiaceae</taxon>
        <taxon>Amycolatopsis</taxon>
    </lineage>
</organism>
<proteinExistence type="evidence at protein level"/>
<keyword id="KW-0032">Aminotransferase</keyword>
<keyword id="KW-0045">Antibiotic biosynthesis</keyword>
<keyword id="KW-0663">Pyridoxal phosphate</keyword>
<keyword id="KW-0808">Transferase</keyword>
<evidence type="ECO:0000250" key="1">
    <source>
        <dbReference type="UniProtKB" id="P9WQ77"/>
    </source>
</evidence>
<evidence type="ECO:0000269" key="2">
    <source>
    </source>
</evidence>
<evidence type="ECO:0000303" key="3">
    <source>
    </source>
</evidence>
<evidence type="ECO:0000305" key="4"/>
<evidence type="ECO:0000305" key="5">
    <source>
    </source>
</evidence>
<accession>Q05174</accession>
<comment type="function">
    <text evidence="2">Catalyzes the transfer of the terminal amino group of L-lysine to alpha-ketoglutarate to yield L-glutamate and 2-aminoadipate 6-semialdehyde ((S)-2-amino-6-oxohexanoate), which is spontaneously converted to the dehydrated form 1-piperideine 6-carboxylate.</text>
</comment>
<comment type="catalytic activity">
    <reaction evidence="2">
        <text>L-lysine + 2-oxoglutarate = (S)-2-amino-6-oxohexanoate + L-glutamate</text>
        <dbReference type="Rhea" id="RHEA:21200"/>
        <dbReference type="ChEBI" id="CHEBI:16810"/>
        <dbReference type="ChEBI" id="CHEBI:29985"/>
        <dbReference type="ChEBI" id="CHEBI:32551"/>
        <dbReference type="ChEBI" id="CHEBI:58321"/>
        <dbReference type="EC" id="2.6.1.36"/>
    </reaction>
</comment>
<comment type="cofactor">
    <cofactor evidence="1">
        <name>pyridoxal 5'-phosphate</name>
        <dbReference type="ChEBI" id="CHEBI:597326"/>
    </cofactor>
</comment>
<comment type="pathway">
    <text evidence="2 5">Antibiotic biosynthesis; cephamycin C biosynthesis.</text>
</comment>
<comment type="similarity">
    <text evidence="4">Belongs to the class-III pyridoxal-phosphate-dependent aminotransferase family.</text>
</comment>
<name>LAT_AMYLA</name>
<feature type="chain" id="PRO_0000120510" description="L-lysine-epsilon aminotransferase">
    <location>
        <begin position="1"/>
        <end position="450"/>
    </location>
</feature>
<feature type="binding site" evidence="1">
    <location>
        <position position="127"/>
    </location>
    <ligand>
        <name>pyridoxal 5'-phosphate</name>
        <dbReference type="ChEBI" id="CHEBI:597326"/>
    </ligand>
</feature>
<feature type="binding site" evidence="1">
    <location>
        <position position="128"/>
    </location>
    <ligand>
        <name>pyridoxal 5'-phosphate</name>
        <dbReference type="ChEBI" id="CHEBI:597326"/>
    </ligand>
</feature>
<feature type="binding site" evidence="1">
    <location>
        <position position="168"/>
    </location>
    <ligand>
        <name>2-oxoglutarate</name>
        <dbReference type="ChEBI" id="CHEBI:16810"/>
    </ligand>
</feature>
<feature type="binding site" evidence="1">
    <location>
        <position position="168"/>
    </location>
    <ligand>
        <name>L-lysine</name>
        <dbReference type="ChEBI" id="CHEBI:32551"/>
    </ligand>
</feature>
<feature type="binding site" evidence="1">
    <location>
        <position position="274"/>
    </location>
    <ligand>
        <name>2-oxoglutarate</name>
        <dbReference type="ChEBI" id="CHEBI:16810"/>
    </ligand>
</feature>
<feature type="binding site" evidence="1">
    <location>
        <position position="274"/>
    </location>
    <ligand>
        <name>pyridoxal 5'-phosphate</name>
        <dbReference type="ChEBI" id="CHEBI:597326"/>
    </ligand>
</feature>
<feature type="binding site" evidence="1">
    <location>
        <position position="423"/>
    </location>
    <ligand>
        <name>2-oxoglutarate</name>
        <dbReference type="ChEBI" id="CHEBI:16810"/>
    </ligand>
</feature>
<feature type="modified residue" description="N6-(pyridoxal phosphate)lysine" evidence="1">
    <location>
        <position position="300"/>
    </location>
</feature>
<reference key="1">
    <citation type="journal article" date="1991" name="J. Bacteriol.">
        <title>A gene encoding lysine 6-aminotransferase, which forms the beta-lactam precursor alpha-aminoadipic acid, is located in the cluster of cephamycin biosynthetic genes in Nocardia lactamdurans.</title>
        <authorList>
            <person name="Coque J."/>
            <person name="Liras P."/>
            <person name="Laiz L."/>
            <person name="Martin J."/>
        </authorList>
    </citation>
    <scope>NUCLEOTIDE SEQUENCE [GENOMIC DNA]</scope>
    <source>
        <strain>LC411</strain>
    </source>
</reference>
<reference key="2">
    <citation type="journal article" date="2000" name="Appl. Microbiol. Biotechnol.">
        <title>Overexpression of the lat gene in Nocardia lactamdurans from strong heterologous promoters results in very high levels of lysine-6-aminotransferase and up to two-fold increase in cephamycin C production.</title>
        <authorList>
            <person name="Chary V.K."/>
            <person name="de la Fuente J.L."/>
            <person name="Leitao A.L."/>
            <person name="Liras P."/>
            <person name="Martin J.F."/>
        </authorList>
    </citation>
    <scope>FUNCTION</scope>
    <scope>CATALYTIC ACTIVITY</scope>
    <scope>PATHWAY</scope>
    <source>
        <strain>LC411</strain>
    </source>
</reference>
<dbReference type="EC" id="2.6.1.36" evidence="2"/>
<dbReference type="EMBL" id="Z21681">
    <property type="protein sequence ID" value="CAA79796.1"/>
    <property type="molecule type" value="Genomic_DNA"/>
</dbReference>
<dbReference type="PIR" id="A38171">
    <property type="entry name" value="A38171"/>
</dbReference>
<dbReference type="SMR" id="Q05174"/>
<dbReference type="UniPathway" id="UPA00183"/>
<dbReference type="GO" id="GO:0045484">
    <property type="term" value="F:L-lysine 6-transaminase activity"/>
    <property type="evidence" value="ECO:0007669"/>
    <property type="project" value="UniProtKB-EC"/>
</dbReference>
<dbReference type="GO" id="GO:0030170">
    <property type="term" value="F:pyridoxal phosphate binding"/>
    <property type="evidence" value="ECO:0007669"/>
    <property type="project" value="InterPro"/>
</dbReference>
<dbReference type="GO" id="GO:0017000">
    <property type="term" value="P:antibiotic biosynthetic process"/>
    <property type="evidence" value="ECO:0007669"/>
    <property type="project" value="UniProtKB-KW"/>
</dbReference>
<dbReference type="GO" id="GO:0009450">
    <property type="term" value="P:gamma-aminobutyric acid catabolic process"/>
    <property type="evidence" value="ECO:0007669"/>
    <property type="project" value="TreeGrafter"/>
</dbReference>
<dbReference type="CDD" id="cd00610">
    <property type="entry name" value="OAT_like"/>
    <property type="match status" value="1"/>
</dbReference>
<dbReference type="Gene3D" id="3.90.1150.10">
    <property type="entry name" value="Aspartate Aminotransferase, domain 1"/>
    <property type="match status" value="1"/>
</dbReference>
<dbReference type="Gene3D" id="3.40.640.10">
    <property type="entry name" value="Type I PLP-dependent aspartate aminotransferase-like (Major domain)"/>
    <property type="match status" value="1"/>
</dbReference>
<dbReference type="InterPro" id="IPR005814">
    <property type="entry name" value="Aminotrans_3"/>
</dbReference>
<dbReference type="InterPro" id="IPR017657">
    <property type="entry name" value="L-lysine_6-transaminase"/>
</dbReference>
<dbReference type="InterPro" id="IPR015424">
    <property type="entry name" value="PyrdxlP-dep_Trfase"/>
</dbReference>
<dbReference type="InterPro" id="IPR015421">
    <property type="entry name" value="PyrdxlP-dep_Trfase_major"/>
</dbReference>
<dbReference type="InterPro" id="IPR015422">
    <property type="entry name" value="PyrdxlP-dep_Trfase_small"/>
</dbReference>
<dbReference type="NCBIfam" id="TIGR03251">
    <property type="entry name" value="LAT_fam"/>
    <property type="match status" value="1"/>
</dbReference>
<dbReference type="PANTHER" id="PTHR43206:SF2">
    <property type="entry name" value="4-AMINOBUTYRATE AMINOTRANSFERASE GABT"/>
    <property type="match status" value="1"/>
</dbReference>
<dbReference type="PANTHER" id="PTHR43206">
    <property type="entry name" value="AMINOTRANSFERASE"/>
    <property type="match status" value="1"/>
</dbReference>
<dbReference type="Pfam" id="PF00202">
    <property type="entry name" value="Aminotran_3"/>
    <property type="match status" value="1"/>
</dbReference>
<dbReference type="PIRSF" id="PIRSF000521">
    <property type="entry name" value="Transaminase_4ab_Lys_Orn"/>
    <property type="match status" value="1"/>
</dbReference>
<dbReference type="SUPFAM" id="SSF53383">
    <property type="entry name" value="PLP-dependent transferases"/>
    <property type="match status" value="1"/>
</dbReference>
<dbReference type="PROSITE" id="PS00600">
    <property type="entry name" value="AA_TRANSFER_CLASS_3"/>
    <property type="match status" value="1"/>
</dbReference>